<gene>
    <name type="primary">V-SRC</name>
</gene>
<dbReference type="EC" id="2.7.10.2"/>
<dbReference type="EMBL" id="K00928">
    <property type="protein sequence ID" value="AAA42565.1"/>
    <property type="molecule type" value="Genomic_RNA"/>
</dbReference>
<dbReference type="PDB" id="1QWE">
    <property type="method" value="NMR"/>
    <property type="chains" value="A=81-140"/>
</dbReference>
<dbReference type="PDB" id="1QWF">
    <property type="method" value="NMR"/>
    <property type="chains" value="A=81-140"/>
</dbReference>
<dbReference type="PDBsum" id="1QWE"/>
<dbReference type="PDBsum" id="1QWF"/>
<dbReference type="BMRB" id="P00525"/>
<dbReference type="SMR" id="P00525"/>
<dbReference type="BindingDB" id="P00525"/>
<dbReference type="BRENDA" id="2.7.10.2">
    <property type="organism ID" value="600"/>
</dbReference>
<dbReference type="EvolutionaryTrace" id="P00525"/>
<dbReference type="GO" id="GO:0005524">
    <property type="term" value="F:ATP binding"/>
    <property type="evidence" value="ECO:0007669"/>
    <property type="project" value="UniProtKB-KW"/>
</dbReference>
<dbReference type="GO" id="GO:0004715">
    <property type="term" value="F:non-membrane spanning protein tyrosine kinase activity"/>
    <property type="evidence" value="ECO:0007669"/>
    <property type="project" value="UniProtKB-EC"/>
</dbReference>
<dbReference type="CDD" id="cd10365">
    <property type="entry name" value="SH2_Src_Src"/>
    <property type="match status" value="1"/>
</dbReference>
<dbReference type="CDD" id="cd12008">
    <property type="entry name" value="SH3_Src"/>
    <property type="match status" value="1"/>
</dbReference>
<dbReference type="FunFam" id="1.10.510.10:FF:000553">
    <property type="entry name" value="Tyrosine-protein kinase"/>
    <property type="match status" value="1"/>
</dbReference>
<dbReference type="FunFam" id="2.30.30.40:FF:000083">
    <property type="entry name" value="Tyrosine-protein kinase"/>
    <property type="match status" value="1"/>
</dbReference>
<dbReference type="FunFam" id="3.30.200.20:FF:000016">
    <property type="entry name" value="Tyrosine-protein kinase"/>
    <property type="match status" value="1"/>
</dbReference>
<dbReference type="FunFam" id="3.30.505.10:FF:000001">
    <property type="entry name" value="Tyrosine-protein kinase"/>
    <property type="match status" value="1"/>
</dbReference>
<dbReference type="Gene3D" id="3.30.200.20">
    <property type="entry name" value="Phosphorylase Kinase, domain 1"/>
    <property type="match status" value="1"/>
</dbReference>
<dbReference type="Gene3D" id="3.30.505.10">
    <property type="entry name" value="SH2 domain"/>
    <property type="match status" value="1"/>
</dbReference>
<dbReference type="Gene3D" id="2.30.30.40">
    <property type="entry name" value="SH3 Domains"/>
    <property type="match status" value="1"/>
</dbReference>
<dbReference type="Gene3D" id="1.10.510.10">
    <property type="entry name" value="Transferase(Phosphotransferase) domain 1"/>
    <property type="match status" value="1"/>
</dbReference>
<dbReference type="InterPro" id="IPR011009">
    <property type="entry name" value="Kinase-like_dom_sf"/>
</dbReference>
<dbReference type="InterPro" id="IPR050198">
    <property type="entry name" value="Non-receptor_tyrosine_kinases"/>
</dbReference>
<dbReference type="InterPro" id="IPR000719">
    <property type="entry name" value="Prot_kinase_dom"/>
</dbReference>
<dbReference type="InterPro" id="IPR017441">
    <property type="entry name" value="Protein_kinase_ATP_BS"/>
</dbReference>
<dbReference type="InterPro" id="IPR001245">
    <property type="entry name" value="Ser-Thr/Tyr_kinase_cat_dom"/>
</dbReference>
<dbReference type="InterPro" id="IPR000980">
    <property type="entry name" value="SH2"/>
</dbReference>
<dbReference type="InterPro" id="IPR036860">
    <property type="entry name" value="SH2_dom_sf"/>
</dbReference>
<dbReference type="InterPro" id="IPR036028">
    <property type="entry name" value="SH3-like_dom_sf"/>
</dbReference>
<dbReference type="InterPro" id="IPR001452">
    <property type="entry name" value="SH3_domain"/>
</dbReference>
<dbReference type="InterPro" id="IPR008266">
    <property type="entry name" value="Tyr_kinase_AS"/>
</dbReference>
<dbReference type="InterPro" id="IPR020635">
    <property type="entry name" value="Tyr_kinase_cat_dom"/>
</dbReference>
<dbReference type="PANTHER" id="PTHR24418">
    <property type="entry name" value="TYROSINE-PROTEIN KINASE"/>
    <property type="match status" value="1"/>
</dbReference>
<dbReference type="Pfam" id="PF07714">
    <property type="entry name" value="PK_Tyr_Ser-Thr"/>
    <property type="match status" value="1"/>
</dbReference>
<dbReference type="Pfam" id="PF00017">
    <property type="entry name" value="SH2"/>
    <property type="match status" value="1"/>
</dbReference>
<dbReference type="Pfam" id="PF00018">
    <property type="entry name" value="SH3_1"/>
    <property type="match status" value="1"/>
</dbReference>
<dbReference type="PRINTS" id="PR00401">
    <property type="entry name" value="SH2DOMAIN"/>
</dbReference>
<dbReference type="PRINTS" id="PR00452">
    <property type="entry name" value="SH3DOMAIN"/>
</dbReference>
<dbReference type="PRINTS" id="PR00109">
    <property type="entry name" value="TYRKINASE"/>
</dbReference>
<dbReference type="SMART" id="SM00252">
    <property type="entry name" value="SH2"/>
    <property type="match status" value="1"/>
</dbReference>
<dbReference type="SMART" id="SM00326">
    <property type="entry name" value="SH3"/>
    <property type="match status" value="1"/>
</dbReference>
<dbReference type="SMART" id="SM00219">
    <property type="entry name" value="TyrKc"/>
    <property type="match status" value="1"/>
</dbReference>
<dbReference type="SUPFAM" id="SSF56112">
    <property type="entry name" value="Protein kinase-like (PK-like)"/>
    <property type="match status" value="1"/>
</dbReference>
<dbReference type="SUPFAM" id="SSF55550">
    <property type="entry name" value="SH2 domain"/>
    <property type="match status" value="1"/>
</dbReference>
<dbReference type="SUPFAM" id="SSF50044">
    <property type="entry name" value="SH3-domain"/>
    <property type="match status" value="1"/>
</dbReference>
<dbReference type="PROSITE" id="PS00107">
    <property type="entry name" value="PROTEIN_KINASE_ATP"/>
    <property type="match status" value="1"/>
</dbReference>
<dbReference type="PROSITE" id="PS50011">
    <property type="entry name" value="PROTEIN_KINASE_DOM"/>
    <property type="match status" value="1"/>
</dbReference>
<dbReference type="PROSITE" id="PS00109">
    <property type="entry name" value="PROTEIN_KINASE_TYR"/>
    <property type="match status" value="1"/>
</dbReference>
<dbReference type="PROSITE" id="PS50001">
    <property type="entry name" value="SH2"/>
    <property type="match status" value="1"/>
</dbReference>
<dbReference type="PROSITE" id="PS50002">
    <property type="entry name" value="SH3"/>
    <property type="match status" value="1"/>
</dbReference>
<organismHost>
    <name type="scientific">Galliformes</name>
    <dbReference type="NCBI Taxonomy" id="8976"/>
</organismHost>
<name>SRC_AVISR</name>
<organism>
    <name type="scientific">Avian sarcoma virus (strain rASV1441)</name>
    <dbReference type="NCBI Taxonomy" id="11894"/>
    <lineage>
        <taxon>Viruses</taxon>
        <taxon>Riboviria</taxon>
        <taxon>Pararnavirae</taxon>
        <taxon>Artverviricota</taxon>
        <taxon>Revtraviricetes</taxon>
        <taxon>Ortervirales</taxon>
        <taxon>Retroviridae</taxon>
        <taxon>Orthoretrovirinae</taxon>
        <taxon>Alpharetrovirus</taxon>
        <taxon>Avian sarcoma virus</taxon>
    </lineage>
</organism>
<comment type="function">
    <text>This phosphoprotein, required for both the initiation and the maintenance of neoplastic transformation, is a protein kinase that catalyzes the phosphorylation of tyrosine residues in vitro.</text>
</comment>
<comment type="catalytic activity">
    <reaction evidence="7">
        <text>L-tyrosyl-[protein] + ATP = O-phospho-L-tyrosyl-[protein] + ADP + H(+)</text>
        <dbReference type="Rhea" id="RHEA:10596"/>
        <dbReference type="Rhea" id="RHEA-COMP:10136"/>
        <dbReference type="Rhea" id="RHEA-COMP:20101"/>
        <dbReference type="ChEBI" id="CHEBI:15378"/>
        <dbReference type="ChEBI" id="CHEBI:30616"/>
        <dbReference type="ChEBI" id="CHEBI:46858"/>
        <dbReference type="ChEBI" id="CHEBI:61978"/>
        <dbReference type="ChEBI" id="CHEBI:456216"/>
        <dbReference type="EC" id="2.7.10.2"/>
    </reaction>
</comment>
<comment type="PTM">
    <text evidence="2">The phosphorylated form is termed pp60v-src.</text>
</comment>
<comment type="similarity">
    <text evidence="4">Belongs to the protein kinase superfamily. Tyr protein kinase family. SRC subfamily.</text>
</comment>
<sequence>MGSSKSKPKDPSQRRCSLEPPDSTHHGGFPASQTPNKTAAPDTHRTPSRSFGTVATEPKLFGGFNTSDTVTSPQRAGALAGGVTTFVALYDYESRTETDLSFKKGERLQIVNNTEGDWWLAHSLTTGQTGYIPSNYVAPSDSIQAEEWYFGKITRRESERLLLNPENPRGTFLVRESETTKGAYCLSVSDFDNAKGLNVKHYKIRKLDSGGFYITSRTQFSSLQQLVAYYSKHADGLCHRLTNVCPTSKPQTQGLAKDAWEIPRESLRLEVKLGQGCFGEVWMGTWNGTTRVAIKTLKPGTMSPEAFLQEAQVMKKLRHEKLVQLYAVVSEEPIYIVTEYMSKGSLLDFLKGEMGKYLRLPQLVDMAAQIASGMAYVERMNYVHRDLRAANILVGENLVCKVADFGLARLIEDNEYTARQGAKFPIKWTAPEAALYGRFTIKSDVWSFGILLTELTTKGRVPYPGMGNGEVLDRVERGYRMPCPPECPESLHDLMCQCWRRDPEERPTFEYLQAQLLPACVLEVAE</sequence>
<proteinExistence type="evidence at protein level"/>
<accession>P00525</accession>
<protein>
    <recommendedName>
        <fullName>Tyrosine-protein kinase transforming protein Src</fullName>
        <ecNumber>2.7.10.2</ecNumber>
    </recommendedName>
    <alternativeName>
        <fullName>pp60v-src</fullName>
        <shortName>p60-Src</shortName>
        <shortName>v-Src</shortName>
    </alternativeName>
</protein>
<feature type="initiator methionine" description="Removed; by host" evidence="1">
    <location>
        <position position="1"/>
    </location>
</feature>
<feature type="chain" id="PRO_0000088147" description="Tyrosine-protein kinase transforming protein Src">
    <location>
        <begin position="2"/>
        <end position="526"/>
    </location>
</feature>
<feature type="domain" description="SH3" evidence="6">
    <location>
        <begin position="81"/>
        <end position="142"/>
    </location>
</feature>
<feature type="domain" description="SH2" evidence="5">
    <location>
        <begin position="148"/>
        <end position="245"/>
    </location>
</feature>
<feature type="domain" description="Protein kinase" evidence="4">
    <location>
        <begin position="267"/>
        <end position="517"/>
    </location>
</feature>
<feature type="region of interest" description="Disordered" evidence="8">
    <location>
        <begin position="1"/>
        <end position="57"/>
    </location>
</feature>
<feature type="compositionally biased region" description="Basic and acidic residues" evidence="8">
    <location>
        <begin position="7"/>
        <end position="25"/>
    </location>
</feature>
<feature type="active site" description="Proton acceptor" evidence="4 7">
    <location>
        <position position="386"/>
    </location>
</feature>
<feature type="binding site" evidence="4">
    <location>
        <begin position="273"/>
        <end position="281"/>
    </location>
    <ligand>
        <name>ATP</name>
        <dbReference type="ChEBI" id="CHEBI:30616"/>
    </ligand>
</feature>
<feature type="binding site" evidence="4">
    <location>
        <position position="295"/>
    </location>
    <ligand>
        <name>ATP</name>
        <dbReference type="ChEBI" id="CHEBI:30616"/>
    </ligand>
</feature>
<feature type="modified residue" description="Phosphotyrosine; by autocatalysis" evidence="2">
    <location>
        <position position="416"/>
    </location>
</feature>
<feature type="lipid moiety-binding region" description="N-myristoyl glycine; by host" evidence="3">
    <location>
        <position position="2"/>
    </location>
</feature>
<feature type="strand" evidence="9">
    <location>
        <begin position="86"/>
        <end position="90"/>
    </location>
</feature>
<feature type="strand" evidence="9">
    <location>
        <begin position="106"/>
        <end position="110"/>
    </location>
</feature>
<feature type="strand" evidence="9">
    <location>
        <begin position="114"/>
        <end position="123"/>
    </location>
</feature>
<feature type="turn" evidence="9">
    <location>
        <begin position="124"/>
        <end position="127"/>
    </location>
</feature>
<feature type="strand" evidence="9">
    <location>
        <begin position="128"/>
        <end position="133"/>
    </location>
</feature>
<feature type="helix" evidence="9">
    <location>
        <begin position="134"/>
        <end position="136"/>
    </location>
</feature>
<feature type="strand" evidence="9">
    <location>
        <begin position="137"/>
        <end position="139"/>
    </location>
</feature>
<reference key="1">
    <citation type="journal article" date="1982" name="J. Virol.">
        <title>DNA sequence of the viral and cellular src gene of chickens. 1. Complete nucleotide sequence of an EcoRI fragment of recovered avian sarcoma virus which codes for gp37 and pp60src.</title>
        <authorList>
            <person name="Takeya T."/>
            <person name="Feldman R.A."/>
            <person name="Hanafusa H."/>
        </authorList>
    </citation>
    <scope>NUCLEOTIDE SEQUENCE [GENOMIC RNA]</scope>
</reference>
<reference key="2">
    <citation type="journal article" date="1994" name="Science">
        <title>Two binding orientations for peptides to the Src SH3 domain: development of a general model for SH3-ligand interactions.</title>
        <authorList>
            <person name="Feng S."/>
            <person name="Chen J.K."/>
            <person name="Yu H."/>
            <person name="Simon J.A."/>
            <person name="Schreiber S.L."/>
        </authorList>
    </citation>
    <scope>STRUCTURE BY NMR OF 85-140</scope>
</reference>
<evidence type="ECO:0000250" key="1"/>
<evidence type="ECO:0000250" key="2">
    <source>
        <dbReference type="UniProtKB" id="P00524"/>
    </source>
</evidence>
<evidence type="ECO:0000250" key="3">
    <source>
        <dbReference type="UniProtKB" id="P00526"/>
    </source>
</evidence>
<evidence type="ECO:0000255" key="4">
    <source>
        <dbReference type="PROSITE-ProRule" id="PRU00159"/>
    </source>
</evidence>
<evidence type="ECO:0000255" key="5">
    <source>
        <dbReference type="PROSITE-ProRule" id="PRU00191"/>
    </source>
</evidence>
<evidence type="ECO:0000255" key="6">
    <source>
        <dbReference type="PROSITE-ProRule" id="PRU00192"/>
    </source>
</evidence>
<evidence type="ECO:0000255" key="7">
    <source>
        <dbReference type="PROSITE-ProRule" id="PRU10028"/>
    </source>
</evidence>
<evidence type="ECO:0000256" key="8">
    <source>
        <dbReference type="SAM" id="MobiDB-lite"/>
    </source>
</evidence>
<evidence type="ECO:0007829" key="9">
    <source>
        <dbReference type="PDB" id="1QWE"/>
    </source>
</evidence>
<keyword id="KW-0002">3D-structure</keyword>
<keyword id="KW-0067">ATP-binding</keyword>
<keyword id="KW-0418">Kinase</keyword>
<keyword id="KW-0449">Lipoprotein</keyword>
<keyword id="KW-0519">Myristate</keyword>
<keyword id="KW-0547">Nucleotide-binding</keyword>
<keyword id="KW-0553">Oncogene</keyword>
<keyword id="KW-0597">Phosphoprotein</keyword>
<keyword id="KW-0727">SH2 domain</keyword>
<keyword id="KW-0728">SH3 domain</keyword>
<keyword id="KW-0808">Transferase</keyword>
<keyword id="KW-0829">Tyrosine-protein kinase</keyword>